<protein>
    <recommendedName>
        <fullName>CRISPR-associated endoribonuclease Cas2</fullName>
        <ecNumber>3.1.-.-</ecNumber>
    </recommendedName>
</protein>
<comment type="function">
    <text evidence="1">CRISPR (clustered regularly interspaced short palindromic repeat), is an adaptive immune system that provides protection against mobile genetic elements (viruses, transposable elements and conjugative plasmids). CRISPR clusters contain sequences complementary to antecedent mobile elements and target invading nucleic acids. CRISPR clusters are transcribed and processed into CRISPR RNA (crRNA). Functions as a ssRNA-specific endoribonuclease. Involved in the integration of spacer DNA into the CRISPR cassette (By similarity).</text>
</comment>
<comment type="cofactor">
    <cofactor evidence="1">
        <name>Mg(2+)</name>
        <dbReference type="ChEBI" id="CHEBI:18420"/>
    </cofactor>
</comment>
<comment type="subunit">
    <text evidence="1">Homodimer, forms a heterotetramer with a Cas1 homodimer.</text>
</comment>
<comment type="similarity">
    <text evidence="3">Belongs to the CRISPR-associated endoribonuclease Cas2 protein family.</text>
</comment>
<accession>Q57831</accession>
<dbReference type="EC" id="3.1.-.-"/>
<dbReference type="EMBL" id="L77117">
    <property type="protein sequence ID" value="AAB98372.1"/>
    <property type="molecule type" value="Genomic_DNA"/>
</dbReference>
<dbReference type="PIR" id="B64348">
    <property type="entry name" value="B64348"/>
</dbReference>
<dbReference type="SMR" id="Q57831"/>
<dbReference type="STRING" id="243232.MJ_0386"/>
<dbReference type="PaxDb" id="243232-MJ_0386"/>
<dbReference type="EnsemblBacteria" id="AAB98372">
    <property type="protein sequence ID" value="AAB98372"/>
    <property type="gene ID" value="MJ_0386"/>
</dbReference>
<dbReference type="KEGG" id="mja:MJ_0386"/>
<dbReference type="eggNOG" id="arCOG04194">
    <property type="taxonomic scope" value="Archaea"/>
</dbReference>
<dbReference type="HOGENOM" id="CLU_161124_0_1_2"/>
<dbReference type="InParanoid" id="Q57831"/>
<dbReference type="PhylomeDB" id="Q57831"/>
<dbReference type="Proteomes" id="UP000000805">
    <property type="component" value="Chromosome"/>
</dbReference>
<dbReference type="GO" id="GO:0046872">
    <property type="term" value="F:metal ion binding"/>
    <property type="evidence" value="ECO:0007669"/>
    <property type="project" value="UniProtKB-UniRule"/>
</dbReference>
<dbReference type="GO" id="GO:0004521">
    <property type="term" value="F:RNA endonuclease activity"/>
    <property type="evidence" value="ECO:0007669"/>
    <property type="project" value="InterPro"/>
</dbReference>
<dbReference type="GO" id="GO:0051607">
    <property type="term" value="P:defense response to virus"/>
    <property type="evidence" value="ECO:0007669"/>
    <property type="project" value="UniProtKB-UniRule"/>
</dbReference>
<dbReference type="GO" id="GO:0043571">
    <property type="term" value="P:maintenance of CRISPR repeat elements"/>
    <property type="evidence" value="ECO:0007669"/>
    <property type="project" value="UniProtKB-UniRule"/>
</dbReference>
<dbReference type="CDD" id="cd09725">
    <property type="entry name" value="Cas2_I_II_III"/>
    <property type="match status" value="1"/>
</dbReference>
<dbReference type="Gene3D" id="3.30.70.240">
    <property type="match status" value="1"/>
</dbReference>
<dbReference type="HAMAP" id="MF_01471">
    <property type="entry name" value="Cas2"/>
    <property type="match status" value="1"/>
</dbReference>
<dbReference type="InterPro" id="IPR021127">
    <property type="entry name" value="CRISPR_associated_Cas2"/>
</dbReference>
<dbReference type="InterPro" id="IPR019199">
    <property type="entry name" value="Virulence_VapD/CRISPR_Cas2"/>
</dbReference>
<dbReference type="NCBIfam" id="TIGR01573">
    <property type="entry name" value="cas2"/>
    <property type="match status" value="1"/>
</dbReference>
<dbReference type="PANTHER" id="PTHR34405">
    <property type="entry name" value="CRISPR-ASSOCIATED ENDORIBONUCLEASE CAS2"/>
    <property type="match status" value="1"/>
</dbReference>
<dbReference type="PANTHER" id="PTHR34405:SF1">
    <property type="entry name" value="CRISPR-ASSOCIATED ENDORIBONUCLEASE CAS2"/>
    <property type="match status" value="1"/>
</dbReference>
<dbReference type="Pfam" id="PF09827">
    <property type="entry name" value="CRISPR_Cas2"/>
    <property type="match status" value="1"/>
</dbReference>
<dbReference type="SUPFAM" id="SSF143430">
    <property type="entry name" value="TTP0101/SSO1404-like"/>
    <property type="match status" value="1"/>
</dbReference>
<reference key="1">
    <citation type="journal article" date="1996" name="Science">
        <title>Complete genome sequence of the methanogenic archaeon, Methanococcus jannaschii.</title>
        <authorList>
            <person name="Bult C.J."/>
            <person name="White O."/>
            <person name="Olsen G.J."/>
            <person name="Zhou L."/>
            <person name="Fleischmann R.D."/>
            <person name="Sutton G.G."/>
            <person name="Blake J.A."/>
            <person name="FitzGerald L.M."/>
            <person name="Clayton R.A."/>
            <person name="Gocayne J.D."/>
            <person name="Kerlavage A.R."/>
            <person name="Dougherty B.A."/>
            <person name="Tomb J.-F."/>
            <person name="Adams M.D."/>
            <person name="Reich C.I."/>
            <person name="Overbeek R."/>
            <person name="Kirkness E.F."/>
            <person name="Weinstock K.G."/>
            <person name="Merrick J.M."/>
            <person name="Glodek A."/>
            <person name="Scott J.L."/>
            <person name="Geoghagen N.S.M."/>
            <person name="Weidman J.F."/>
            <person name="Fuhrmann J.L."/>
            <person name="Nguyen D."/>
            <person name="Utterback T.R."/>
            <person name="Kelley J.M."/>
            <person name="Peterson J.D."/>
            <person name="Sadow P.W."/>
            <person name="Hanna M.C."/>
            <person name="Cotton M.D."/>
            <person name="Roberts K.M."/>
            <person name="Hurst M.A."/>
            <person name="Kaine B.P."/>
            <person name="Borodovsky M."/>
            <person name="Klenk H.-P."/>
            <person name="Fraser C.M."/>
            <person name="Smith H.O."/>
            <person name="Woese C.R."/>
            <person name="Venter J.C."/>
        </authorList>
    </citation>
    <scope>NUCLEOTIDE SEQUENCE [LARGE SCALE GENOMIC DNA]</scope>
    <source>
        <strain>ATCC 43067 / DSM 2661 / JAL-1 / JCM 10045 / NBRC 100440</strain>
    </source>
</reference>
<sequence length="114" mass="13655">MLKKEWDYVNKILKKIKNIRNLLQDESMYVIIVYDVNVSRVNKIKSFLRKHLNWVQNSVFEGEVTKAEFERIKDGILRIIDEDEDSVIIYQFPLNFMPKREILGLEKNPIDDII</sequence>
<evidence type="ECO:0000250" key="1"/>
<evidence type="ECO:0000255" key="2"/>
<evidence type="ECO:0000305" key="3"/>
<name>CAS2_METJA</name>
<gene>
    <name type="primary">cas2</name>
    <name type="ordered locus">MJ0386</name>
</gene>
<keyword id="KW-0051">Antiviral defense</keyword>
<keyword id="KW-0255">Endonuclease</keyword>
<keyword id="KW-0378">Hydrolase</keyword>
<keyword id="KW-0460">Magnesium</keyword>
<keyword id="KW-0479">Metal-binding</keyword>
<keyword id="KW-0540">Nuclease</keyword>
<keyword id="KW-1185">Reference proteome</keyword>
<proteinExistence type="inferred from homology"/>
<organism>
    <name type="scientific">Methanocaldococcus jannaschii (strain ATCC 43067 / DSM 2661 / JAL-1 / JCM 10045 / NBRC 100440)</name>
    <name type="common">Methanococcus jannaschii</name>
    <dbReference type="NCBI Taxonomy" id="243232"/>
    <lineage>
        <taxon>Archaea</taxon>
        <taxon>Methanobacteriati</taxon>
        <taxon>Methanobacteriota</taxon>
        <taxon>Methanomada group</taxon>
        <taxon>Methanococci</taxon>
        <taxon>Methanococcales</taxon>
        <taxon>Methanocaldococcaceae</taxon>
        <taxon>Methanocaldococcus</taxon>
    </lineage>
</organism>
<feature type="chain" id="PRO_0000106849" description="CRISPR-associated endoribonuclease Cas2">
    <location>
        <begin position="1"/>
        <end position="114"/>
    </location>
</feature>
<feature type="binding site" evidence="2">
    <location>
        <position position="35"/>
    </location>
    <ligand>
        <name>Mg(2+)</name>
        <dbReference type="ChEBI" id="CHEBI:18420"/>
        <note>catalytic</note>
    </ligand>
</feature>